<dbReference type="EC" id="3.1.1.3" evidence="1"/>
<dbReference type="EMBL" id="X66218">
    <property type="protein sequence ID" value="CAA46961.1"/>
    <property type="molecule type" value="mRNA"/>
</dbReference>
<dbReference type="PIR" id="S21223">
    <property type="entry name" value="S21223"/>
</dbReference>
<dbReference type="RefSeq" id="NP_001157421.1">
    <property type="nucleotide sequence ID" value="NM_001163949.1"/>
</dbReference>
<dbReference type="PDB" id="1HPL">
    <property type="method" value="X-ray"/>
    <property type="resolution" value="2.30 A"/>
    <property type="chains" value="A/B=13-461"/>
</dbReference>
<dbReference type="PDBsum" id="1HPL"/>
<dbReference type="SMR" id="P29183"/>
<dbReference type="FunCoup" id="P29183">
    <property type="interactions" value="163"/>
</dbReference>
<dbReference type="STRING" id="9796.ENSECAP00000007877"/>
<dbReference type="ESTHER" id="horse-1plip">
    <property type="family name" value="Pancreatic_lipase"/>
</dbReference>
<dbReference type="PaxDb" id="9796-ENSECAP00000007877"/>
<dbReference type="GeneID" id="100034202"/>
<dbReference type="KEGG" id="ecb:100034202"/>
<dbReference type="CTD" id="5406"/>
<dbReference type="HOGENOM" id="CLU_027171_0_2_1"/>
<dbReference type="InParanoid" id="P29183"/>
<dbReference type="OrthoDB" id="199913at2759"/>
<dbReference type="EvolutionaryTrace" id="P29183"/>
<dbReference type="Proteomes" id="UP000002281">
    <property type="component" value="Unplaced"/>
</dbReference>
<dbReference type="GO" id="GO:0005615">
    <property type="term" value="C:extracellular space"/>
    <property type="evidence" value="ECO:0000318"/>
    <property type="project" value="GO_Central"/>
</dbReference>
<dbReference type="GO" id="GO:0047376">
    <property type="term" value="F:all-trans-retinyl-palmitate hydrolase, all-trans-retinol forming activity"/>
    <property type="evidence" value="ECO:0007669"/>
    <property type="project" value="RHEA"/>
</dbReference>
<dbReference type="GO" id="GO:0004465">
    <property type="term" value="F:lipoprotein lipase activity"/>
    <property type="evidence" value="ECO:0000318"/>
    <property type="project" value="GO_Central"/>
</dbReference>
<dbReference type="GO" id="GO:0046872">
    <property type="term" value="F:metal ion binding"/>
    <property type="evidence" value="ECO:0007669"/>
    <property type="project" value="UniProtKB-KW"/>
</dbReference>
<dbReference type="GO" id="GO:0008970">
    <property type="term" value="F:phospholipase A1 activity"/>
    <property type="evidence" value="ECO:0000318"/>
    <property type="project" value="GO_Central"/>
</dbReference>
<dbReference type="GO" id="GO:0004806">
    <property type="term" value="F:triacylglycerol lipase activity"/>
    <property type="evidence" value="ECO:0000250"/>
    <property type="project" value="UniProtKB"/>
</dbReference>
<dbReference type="GO" id="GO:0042632">
    <property type="term" value="P:cholesterol homeostasis"/>
    <property type="evidence" value="ECO:0000318"/>
    <property type="project" value="GO_Central"/>
</dbReference>
<dbReference type="GO" id="GO:0006633">
    <property type="term" value="P:fatty acid biosynthetic process"/>
    <property type="evidence" value="ECO:0000318"/>
    <property type="project" value="GO_Central"/>
</dbReference>
<dbReference type="GO" id="GO:0034375">
    <property type="term" value="P:high-density lipoprotein particle remodeling"/>
    <property type="evidence" value="ECO:0000318"/>
    <property type="project" value="GO_Central"/>
</dbReference>
<dbReference type="GO" id="GO:0019433">
    <property type="term" value="P:triglyceride catabolic process"/>
    <property type="evidence" value="ECO:0000318"/>
    <property type="project" value="GO_Central"/>
</dbReference>
<dbReference type="CDD" id="cd00707">
    <property type="entry name" value="Pancreat_lipase_like"/>
    <property type="match status" value="1"/>
</dbReference>
<dbReference type="CDD" id="cd01759">
    <property type="entry name" value="PLAT_PL"/>
    <property type="match status" value="1"/>
</dbReference>
<dbReference type="FunFam" id="3.40.50.1820:FF:000033">
    <property type="entry name" value="Pancreatic triacylglycerol lipase"/>
    <property type="match status" value="1"/>
</dbReference>
<dbReference type="FunFam" id="2.60.60.20:FF:000003">
    <property type="entry name" value="Triacylglycerol lipase"/>
    <property type="match status" value="1"/>
</dbReference>
<dbReference type="Gene3D" id="3.40.50.1820">
    <property type="entry name" value="alpha/beta hydrolase"/>
    <property type="match status" value="1"/>
</dbReference>
<dbReference type="Gene3D" id="2.60.60.20">
    <property type="entry name" value="PLAT/LH2 domain"/>
    <property type="match status" value="1"/>
</dbReference>
<dbReference type="InterPro" id="IPR029058">
    <property type="entry name" value="AB_hydrolase_fold"/>
</dbReference>
<dbReference type="InterPro" id="IPR013818">
    <property type="entry name" value="Lipase"/>
</dbReference>
<dbReference type="InterPro" id="IPR016272">
    <property type="entry name" value="Lipase_LIPH"/>
</dbReference>
<dbReference type="InterPro" id="IPR033906">
    <property type="entry name" value="Lipase_N"/>
</dbReference>
<dbReference type="InterPro" id="IPR002331">
    <property type="entry name" value="Lipase_panc"/>
</dbReference>
<dbReference type="InterPro" id="IPR001024">
    <property type="entry name" value="PLAT/LH2_dom"/>
</dbReference>
<dbReference type="InterPro" id="IPR036392">
    <property type="entry name" value="PLAT/LH2_dom_sf"/>
</dbReference>
<dbReference type="InterPro" id="IPR000734">
    <property type="entry name" value="TAG_lipase"/>
</dbReference>
<dbReference type="PANTHER" id="PTHR11610">
    <property type="entry name" value="LIPASE"/>
    <property type="match status" value="1"/>
</dbReference>
<dbReference type="PANTHER" id="PTHR11610:SF147">
    <property type="entry name" value="PANCREATIC TRIACYLGLYCEROL LIPASE"/>
    <property type="match status" value="1"/>
</dbReference>
<dbReference type="Pfam" id="PF00151">
    <property type="entry name" value="Lipase"/>
    <property type="match status" value="1"/>
</dbReference>
<dbReference type="Pfam" id="PF01477">
    <property type="entry name" value="PLAT"/>
    <property type="match status" value="1"/>
</dbReference>
<dbReference type="PIRSF" id="PIRSF000865">
    <property type="entry name" value="Lipoprotein_lipase_LIPH"/>
    <property type="match status" value="1"/>
</dbReference>
<dbReference type="PRINTS" id="PR00823">
    <property type="entry name" value="PANCLIPASE"/>
</dbReference>
<dbReference type="PRINTS" id="PR00821">
    <property type="entry name" value="TAGLIPASE"/>
</dbReference>
<dbReference type="SMART" id="SM00308">
    <property type="entry name" value="LH2"/>
    <property type="match status" value="1"/>
</dbReference>
<dbReference type="SUPFAM" id="SSF53474">
    <property type="entry name" value="alpha/beta-Hydrolases"/>
    <property type="match status" value="1"/>
</dbReference>
<dbReference type="SUPFAM" id="SSF49723">
    <property type="entry name" value="Lipase/lipooxygenase domain (PLAT/LH2 domain)"/>
    <property type="match status" value="1"/>
</dbReference>
<dbReference type="PROSITE" id="PS00120">
    <property type="entry name" value="LIPASE_SER"/>
    <property type="match status" value="1"/>
</dbReference>
<dbReference type="PROSITE" id="PS50095">
    <property type="entry name" value="PLAT"/>
    <property type="match status" value="1"/>
</dbReference>
<feature type="signal peptide">
    <location>
        <begin position="1" status="less than"/>
        <end position="12"/>
    </location>
</feature>
<feature type="chain" id="PRO_0000017784" description="Pancreatic triacylglycerol lipase">
    <location>
        <begin position="13"/>
        <end position="461"/>
    </location>
</feature>
<feature type="domain" description="PLAT" evidence="2">
    <location>
        <begin position="351"/>
        <end position="461"/>
    </location>
</feature>
<feature type="active site" description="Nucleophile">
    <location>
        <position position="165"/>
    </location>
</feature>
<feature type="active site" description="Charge relay system">
    <location>
        <position position="189"/>
    </location>
</feature>
<feature type="active site" description="Charge relay system">
    <location>
        <position position="276"/>
    </location>
</feature>
<feature type="binding site">
    <location>
        <position position="200"/>
    </location>
    <ligand>
        <name>Ca(2+)</name>
        <dbReference type="ChEBI" id="CHEBI:29108"/>
    </ligand>
</feature>
<feature type="binding site">
    <location>
        <position position="203"/>
    </location>
    <ligand>
        <name>Ca(2+)</name>
        <dbReference type="ChEBI" id="CHEBI:29108"/>
    </ligand>
</feature>
<feature type="binding site">
    <location>
        <position position="205"/>
    </location>
    <ligand>
        <name>Ca(2+)</name>
        <dbReference type="ChEBI" id="CHEBI:29108"/>
    </ligand>
</feature>
<feature type="binding site">
    <location>
        <position position="208"/>
    </location>
    <ligand>
        <name>Ca(2+)</name>
        <dbReference type="ChEBI" id="CHEBI:29108"/>
    </ligand>
</feature>
<feature type="disulfide bond">
    <location>
        <begin position="16"/>
        <end position="22"/>
    </location>
</feature>
<feature type="disulfide bond">
    <location>
        <begin position="103"/>
        <end position="114"/>
    </location>
</feature>
<feature type="disulfide bond">
    <location>
        <begin position="250"/>
        <end position="274"/>
    </location>
</feature>
<feature type="disulfide bond">
    <location>
        <begin position="298"/>
        <end position="309"/>
    </location>
</feature>
<feature type="disulfide bond">
    <location>
        <begin position="312"/>
        <end position="317"/>
    </location>
</feature>
<feature type="disulfide bond">
    <location>
        <begin position="445"/>
        <end position="461"/>
    </location>
</feature>
<feature type="mutagenesis site" description="80% loss of P-nitrophenyl acetate hydrolysis activity." evidence="3">
    <original>S</original>
    <variation>X</variation>
    <location>
        <position position="165"/>
    </location>
</feature>
<feature type="non-terminal residue">
    <location>
        <position position="1"/>
    </location>
</feature>
<feature type="strand" evidence="5">
    <location>
        <begin position="14"/>
        <end position="17"/>
    </location>
</feature>
<feature type="turn" evidence="5">
    <location>
        <begin position="18"/>
        <end position="20"/>
    </location>
</feature>
<feature type="strand" evidence="5">
    <location>
        <begin position="21"/>
        <end position="24"/>
    </location>
</feature>
<feature type="strand" evidence="5">
    <location>
        <begin position="29"/>
        <end position="32"/>
    </location>
</feature>
<feature type="helix" evidence="5">
    <location>
        <begin position="44"/>
        <end position="47"/>
    </location>
</feature>
<feature type="strand" evidence="5">
    <location>
        <begin position="50"/>
        <end position="55"/>
    </location>
</feature>
<feature type="strand" evidence="5">
    <location>
        <begin position="58"/>
        <end position="65"/>
    </location>
</feature>
<feature type="helix" evidence="5">
    <location>
        <begin position="69"/>
        <end position="74"/>
    </location>
</feature>
<feature type="strand" evidence="5">
    <location>
        <begin position="81"/>
        <end position="87"/>
    </location>
</feature>
<feature type="helix" evidence="5">
    <location>
        <begin position="98"/>
        <end position="109"/>
    </location>
</feature>
<feature type="strand" evidence="5">
    <location>
        <begin position="112"/>
        <end position="118"/>
    </location>
</feature>
<feature type="helix" evidence="5">
    <location>
        <begin position="120"/>
        <end position="123"/>
    </location>
</feature>
<feature type="helix" evidence="5">
    <location>
        <begin position="127"/>
        <end position="152"/>
    </location>
</feature>
<feature type="helix" evidence="5">
    <location>
        <begin position="156"/>
        <end position="158"/>
    </location>
</feature>
<feature type="strand" evidence="5">
    <location>
        <begin position="159"/>
        <end position="164"/>
    </location>
</feature>
<feature type="helix" evidence="5">
    <location>
        <begin position="167"/>
        <end position="177"/>
    </location>
</feature>
<feature type="turn" evidence="5">
    <location>
        <begin position="178"/>
        <end position="180"/>
    </location>
</feature>
<feature type="strand" evidence="5">
    <location>
        <begin position="182"/>
        <end position="189"/>
    </location>
</feature>
<feature type="turn" evidence="5">
    <location>
        <begin position="193"/>
        <end position="197"/>
    </location>
</feature>
<feature type="turn" evidence="5">
    <location>
        <begin position="200"/>
        <end position="202"/>
    </location>
</feature>
<feature type="helix" evidence="5">
    <location>
        <begin position="206"/>
        <end position="208"/>
    </location>
</feature>
<feature type="strand" evidence="5">
    <location>
        <begin position="209"/>
        <end position="215"/>
    </location>
</feature>
<feature type="helix" evidence="5">
    <location>
        <begin position="222"/>
        <end position="225"/>
    </location>
</feature>
<feature type="strand" evidence="5">
    <location>
        <begin position="235"/>
        <end position="241"/>
    </location>
</feature>
<feature type="helix" evidence="5">
    <location>
        <begin position="261"/>
        <end position="265"/>
    </location>
</feature>
<feature type="helix" evidence="5">
    <location>
        <begin position="274"/>
        <end position="288"/>
    </location>
</feature>
<feature type="helix" evidence="5">
    <location>
        <begin position="301"/>
        <end position="305"/>
    </location>
</feature>
<feature type="strand" evidence="5">
    <location>
        <begin position="319"/>
        <end position="321"/>
    </location>
</feature>
<feature type="helix" evidence="5">
    <location>
        <begin position="324"/>
        <end position="326"/>
    </location>
</feature>
<feature type="turn" evidence="5">
    <location>
        <begin position="328"/>
        <end position="331"/>
    </location>
</feature>
<feature type="strand" evidence="5">
    <location>
        <begin position="332"/>
        <end position="340"/>
    </location>
</feature>
<feature type="strand" evidence="5">
    <location>
        <begin position="344"/>
        <end position="347"/>
    </location>
</feature>
<feature type="strand" evidence="5">
    <location>
        <begin position="351"/>
        <end position="361"/>
    </location>
</feature>
<feature type="strand" evidence="5">
    <location>
        <begin position="364"/>
        <end position="374"/>
    </location>
</feature>
<feature type="strand" evidence="5">
    <location>
        <begin position="382"/>
        <end position="389"/>
    </location>
</feature>
<feature type="strand" evidence="5">
    <location>
        <begin position="394"/>
        <end position="403"/>
    </location>
</feature>
<feature type="strand" evidence="5">
    <location>
        <begin position="407"/>
        <end position="417"/>
    </location>
</feature>
<feature type="strand" evidence="5">
    <location>
        <begin position="427"/>
        <end position="435"/>
    </location>
</feature>
<feature type="strand" evidence="5">
    <location>
        <begin position="441"/>
        <end position="445"/>
    </location>
</feature>
<feature type="strand" evidence="5">
    <location>
        <begin position="456"/>
        <end position="461"/>
    </location>
</feature>
<comment type="function">
    <text evidence="3">Plays an important role in fat metabolism. It preferentially splits the esters of long-chain fatty acids at positions 1 and 3, producing mainly 2-monoacylglycerol and free fatty acids, and shows considerably higher activity against insoluble emulsified substrates than against soluble ones.</text>
</comment>
<comment type="catalytic activity">
    <reaction evidence="1">
        <text>a triacylglycerol + H2O = a diacylglycerol + a fatty acid + H(+)</text>
        <dbReference type="Rhea" id="RHEA:12044"/>
        <dbReference type="ChEBI" id="CHEBI:15377"/>
        <dbReference type="ChEBI" id="CHEBI:15378"/>
        <dbReference type="ChEBI" id="CHEBI:17855"/>
        <dbReference type="ChEBI" id="CHEBI:18035"/>
        <dbReference type="ChEBI" id="CHEBI:28868"/>
        <dbReference type="EC" id="3.1.1.3"/>
    </reaction>
    <physiologicalReaction direction="left-to-right" evidence="1">
        <dbReference type="Rhea" id="RHEA:12045"/>
    </physiologicalReaction>
</comment>
<comment type="catalytic activity">
    <reaction evidence="1">
        <text>1,2,3-tributanoylglycerol + H2O = dibutanoylglycerol + butanoate + H(+)</text>
        <dbReference type="Rhea" id="RHEA:40475"/>
        <dbReference type="ChEBI" id="CHEBI:15377"/>
        <dbReference type="ChEBI" id="CHEBI:15378"/>
        <dbReference type="ChEBI" id="CHEBI:17968"/>
        <dbReference type="ChEBI" id="CHEBI:35020"/>
        <dbReference type="ChEBI" id="CHEBI:76478"/>
    </reaction>
    <physiologicalReaction direction="left-to-right" evidence="1">
        <dbReference type="Rhea" id="RHEA:40476"/>
    </physiologicalReaction>
</comment>
<comment type="catalytic activity">
    <reaction evidence="1">
        <text>1,2,3-tri-(9Z-octadecenoyl)-glycerol + H2O = di-(9Z)-octadecenoylglycerol + (9Z)-octadecenoate + H(+)</text>
        <dbReference type="Rhea" id="RHEA:38575"/>
        <dbReference type="ChEBI" id="CHEBI:15377"/>
        <dbReference type="ChEBI" id="CHEBI:15378"/>
        <dbReference type="ChEBI" id="CHEBI:30823"/>
        <dbReference type="ChEBI" id="CHEBI:53753"/>
        <dbReference type="ChEBI" id="CHEBI:75945"/>
    </reaction>
    <physiologicalReaction direction="left-to-right" evidence="1">
        <dbReference type="Rhea" id="RHEA:38576"/>
    </physiologicalReaction>
</comment>
<comment type="catalytic activity">
    <reaction evidence="1">
        <text>all-trans-retinyl hexadecanoate + H2O = all-trans-retinol + hexadecanoate + H(+)</text>
        <dbReference type="Rhea" id="RHEA:13933"/>
        <dbReference type="ChEBI" id="CHEBI:7896"/>
        <dbReference type="ChEBI" id="CHEBI:15377"/>
        <dbReference type="ChEBI" id="CHEBI:15378"/>
        <dbReference type="ChEBI" id="CHEBI:17336"/>
        <dbReference type="ChEBI" id="CHEBI:17616"/>
    </reaction>
    <physiologicalReaction direction="left-to-right" evidence="1">
        <dbReference type="Rhea" id="RHEA:13934"/>
    </physiologicalReaction>
</comment>
<comment type="catalytic activity">
    <reaction evidence="1">
        <text>1,2-di-(9Z-octadecenoyl)-glycerol + H2O = (9Z-octadecenoyl)-glycerol + (9Z)-octadecenoate + H(+)</text>
        <dbReference type="Rhea" id="RHEA:38455"/>
        <dbReference type="ChEBI" id="CHEBI:15377"/>
        <dbReference type="ChEBI" id="CHEBI:15378"/>
        <dbReference type="ChEBI" id="CHEBI:30823"/>
        <dbReference type="ChEBI" id="CHEBI:52323"/>
        <dbReference type="ChEBI" id="CHEBI:75937"/>
    </reaction>
    <physiologicalReaction direction="left-to-right" evidence="1">
        <dbReference type="Rhea" id="RHEA:38456"/>
    </physiologicalReaction>
</comment>
<comment type="activity regulation">
    <text evidence="1">Inhibited by bile salts, is reactivated by (pro)colipase/CLPS.</text>
</comment>
<comment type="subunit">
    <text evidence="1">Forms a 1:1 stoichiometric complex with (pro)colipase/CLPS.</text>
</comment>
<comment type="subcellular location">
    <subcellularLocation>
        <location evidence="1">Secreted</location>
    </subcellularLocation>
</comment>
<comment type="similarity">
    <text evidence="4">Belongs to the AB hydrolase superfamily. Lipase family.</text>
</comment>
<accession>P29183</accession>
<keyword id="KW-0002">3D-structure</keyword>
<keyword id="KW-0106">Calcium</keyword>
<keyword id="KW-0903">Direct protein sequencing</keyword>
<keyword id="KW-1015">Disulfide bond</keyword>
<keyword id="KW-0378">Hydrolase</keyword>
<keyword id="KW-0442">Lipid degradation</keyword>
<keyword id="KW-0443">Lipid metabolism</keyword>
<keyword id="KW-0479">Metal-binding</keyword>
<keyword id="KW-1185">Reference proteome</keyword>
<keyword id="KW-0964">Secreted</keyword>
<keyword id="KW-0732">Signal</keyword>
<name>LIPP_HORSE</name>
<evidence type="ECO:0000250" key="1">
    <source>
        <dbReference type="UniProtKB" id="P16233"/>
    </source>
</evidence>
<evidence type="ECO:0000255" key="2">
    <source>
        <dbReference type="PROSITE-ProRule" id="PRU00152"/>
    </source>
</evidence>
<evidence type="ECO:0000269" key="3">
    <source>
    </source>
</evidence>
<evidence type="ECO:0000305" key="4"/>
<evidence type="ECO:0007829" key="5">
    <source>
        <dbReference type="PDB" id="1HPL"/>
    </source>
</evidence>
<proteinExistence type="evidence at protein level"/>
<protein>
    <recommendedName>
        <fullName evidence="4">Pancreatic triacylglycerol lipase</fullName>
        <shortName>PL</shortName>
        <shortName>PTL</shortName>
        <shortName>Pancreatic lipase</shortName>
        <ecNumber evidence="1">3.1.1.3</ecNumber>
    </recommendedName>
</protein>
<gene>
    <name type="primary">PNLIP</name>
</gene>
<organism>
    <name type="scientific">Equus caballus</name>
    <name type="common">Horse</name>
    <dbReference type="NCBI Taxonomy" id="9796"/>
    <lineage>
        <taxon>Eukaryota</taxon>
        <taxon>Metazoa</taxon>
        <taxon>Chordata</taxon>
        <taxon>Craniata</taxon>
        <taxon>Vertebrata</taxon>
        <taxon>Euteleostomi</taxon>
        <taxon>Mammalia</taxon>
        <taxon>Eutheria</taxon>
        <taxon>Laurasiatheria</taxon>
        <taxon>Perissodactyla</taxon>
        <taxon>Equidae</taxon>
        <taxon>Equus</taxon>
    </lineage>
</organism>
<sequence length="461" mass="50921">WTLSLLLGAVVGNEVCYERLGCFSDDSPWAGIVERPLKILPWSPEKVNTRFLLYTNENPDNFQEIVADPSTIQSSNFNTGRKTRFIIHGFIDKGEESWLSTMCQNMFKVESVNCICVDWKSGSRTAYSQASQNVRIVGAEVAYLVGVLQSSFDYSPSNVHIIGHSLGSHAAGEAGRRTNGAVGRITGLDPAEPCFQGTPELVRLDPSDAQFVDVIHTDIAPFIPNLGFGMSQTAGHLDFFPNGGKEMPGCQKNVLSQIVDIDGIWQGTRDFAACNHLRSYKYYTDSILNPDGFAGFSCASYSDFTANKCFPCSSEGCPQMGHYADRFPGRTKGVGQLFYLNTGDASNFARWRYRVDVTLSGKKVTGHVLVSLFGNKGNSRQYEIFQGTLKPDNTYSNEFDSDVEVGDLEKVKFIWYNNVINLTLPKVGASKITVERNDGSVFNFCSEETVREDVLLTLTAC</sequence>
<reference key="1">
    <citation type="journal article" date="1992" name="Eur. J. Biochem.">
        <title>Sequence of horse pancreatic lipase as determined by protein and cDNA sequencing. Implications for p-nitrophenyl acetate hydrolysis by pancreatic lipases.</title>
        <authorList>
            <person name="Kerfelec B."/>
            <person name="Foglizzo E."/>
            <person name="Bonicel J."/>
            <person name="Bougis P.E."/>
            <person name="Chapus C."/>
        </authorList>
    </citation>
    <scope>NUCLEOTIDE SEQUENCE [MRNA]</scope>
    <scope>PARTIAL PROTEIN SEQUENCE</scope>
    <scope>MUTAGENESIS OF SER-165</scope>
    <scope>FUNCTION</scope>
</reference>
<reference key="2">
    <citation type="journal article" date="1994" name="J. Mol. Biol.">
        <title>Horse pancreatic lipase. The crystal structure refined at 2.3-A resolution.</title>
        <authorList>
            <person name="Bourne Y."/>
            <person name="Martinez C."/>
            <person name="Kerfelec B."/>
            <person name="Lombardo D."/>
            <person name="Chapus C."/>
            <person name="Cambillau C."/>
        </authorList>
    </citation>
    <scope>X-RAY CRYSTALLOGRAPHY (2.3 ANGSTROMS)</scope>
</reference>